<comment type="function">
    <text evidence="1">Catalyzes the reversible interconversion of serine and glycine with tetrahydrofolate (THF) serving as the one-carbon carrier. This reaction serves as the major source of one-carbon groups required for the biosynthesis of purines, thymidylate, methionine, and other important biomolecules. Also exhibits THF-independent aldolase activity toward beta-hydroxyamino acids, producing glycine and aldehydes, via a retro-aldol mechanism.</text>
</comment>
<comment type="catalytic activity">
    <reaction evidence="1">
        <text>(6R)-5,10-methylene-5,6,7,8-tetrahydrofolate + glycine + H2O = (6S)-5,6,7,8-tetrahydrofolate + L-serine</text>
        <dbReference type="Rhea" id="RHEA:15481"/>
        <dbReference type="ChEBI" id="CHEBI:15377"/>
        <dbReference type="ChEBI" id="CHEBI:15636"/>
        <dbReference type="ChEBI" id="CHEBI:33384"/>
        <dbReference type="ChEBI" id="CHEBI:57305"/>
        <dbReference type="ChEBI" id="CHEBI:57453"/>
        <dbReference type="EC" id="2.1.2.1"/>
    </reaction>
</comment>
<comment type="cofactor">
    <cofactor evidence="1">
        <name>pyridoxal 5'-phosphate</name>
        <dbReference type="ChEBI" id="CHEBI:597326"/>
    </cofactor>
</comment>
<comment type="pathway">
    <text evidence="1">One-carbon metabolism; tetrahydrofolate interconversion.</text>
</comment>
<comment type="pathway">
    <text evidence="1">Amino-acid biosynthesis; glycine biosynthesis; glycine from L-serine: step 1/1.</text>
</comment>
<comment type="subunit">
    <text evidence="1">Homodimer.</text>
</comment>
<comment type="subcellular location">
    <subcellularLocation>
        <location evidence="1">Cytoplasm</location>
    </subcellularLocation>
</comment>
<comment type="similarity">
    <text evidence="1">Belongs to the SHMT family.</text>
</comment>
<gene>
    <name evidence="1" type="primary">glyA</name>
    <name type="ordered locus">SPP_1030</name>
</gene>
<keyword id="KW-0028">Amino-acid biosynthesis</keyword>
<keyword id="KW-0963">Cytoplasm</keyword>
<keyword id="KW-0554">One-carbon metabolism</keyword>
<keyword id="KW-0663">Pyridoxal phosphate</keyword>
<keyword id="KW-0808">Transferase</keyword>
<evidence type="ECO:0000255" key="1">
    <source>
        <dbReference type="HAMAP-Rule" id="MF_00051"/>
    </source>
</evidence>
<dbReference type="EC" id="2.1.2.1" evidence="1"/>
<dbReference type="EMBL" id="CP000920">
    <property type="protein sequence ID" value="ACO22167.1"/>
    <property type="molecule type" value="Genomic_DNA"/>
</dbReference>
<dbReference type="RefSeq" id="WP_000575514.1">
    <property type="nucleotide sequence ID" value="NC_012467.1"/>
</dbReference>
<dbReference type="SMR" id="C1CKA2"/>
<dbReference type="GeneID" id="45653638"/>
<dbReference type="KEGG" id="spp:SPP_1030"/>
<dbReference type="HOGENOM" id="CLU_022477_2_1_9"/>
<dbReference type="UniPathway" id="UPA00193"/>
<dbReference type="UniPathway" id="UPA00288">
    <property type="reaction ID" value="UER01023"/>
</dbReference>
<dbReference type="GO" id="GO:0005829">
    <property type="term" value="C:cytosol"/>
    <property type="evidence" value="ECO:0007669"/>
    <property type="project" value="TreeGrafter"/>
</dbReference>
<dbReference type="GO" id="GO:0004372">
    <property type="term" value="F:glycine hydroxymethyltransferase activity"/>
    <property type="evidence" value="ECO:0007669"/>
    <property type="project" value="UniProtKB-UniRule"/>
</dbReference>
<dbReference type="GO" id="GO:0030170">
    <property type="term" value="F:pyridoxal phosphate binding"/>
    <property type="evidence" value="ECO:0007669"/>
    <property type="project" value="UniProtKB-UniRule"/>
</dbReference>
<dbReference type="GO" id="GO:0019264">
    <property type="term" value="P:glycine biosynthetic process from serine"/>
    <property type="evidence" value="ECO:0007669"/>
    <property type="project" value="UniProtKB-UniRule"/>
</dbReference>
<dbReference type="GO" id="GO:0035999">
    <property type="term" value="P:tetrahydrofolate interconversion"/>
    <property type="evidence" value="ECO:0007669"/>
    <property type="project" value="UniProtKB-UniRule"/>
</dbReference>
<dbReference type="CDD" id="cd00378">
    <property type="entry name" value="SHMT"/>
    <property type="match status" value="1"/>
</dbReference>
<dbReference type="FunFam" id="3.40.640.10:FF:000001">
    <property type="entry name" value="Serine hydroxymethyltransferase"/>
    <property type="match status" value="1"/>
</dbReference>
<dbReference type="FunFam" id="3.90.1150.10:FF:000072">
    <property type="entry name" value="Serine hydroxymethyltransferase"/>
    <property type="match status" value="1"/>
</dbReference>
<dbReference type="Gene3D" id="3.90.1150.10">
    <property type="entry name" value="Aspartate Aminotransferase, domain 1"/>
    <property type="match status" value="1"/>
</dbReference>
<dbReference type="Gene3D" id="3.40.640.10">
    <property type="entry name" value="Type I PLP-dependent aspartate aminotransferase-like (Major domain)"/>
    <property type="match status" value="1"/>
</dbReference>
<dbReference type="HAMAP" id="MF_00051">
    <property type="entry name" value="SHMT"/>
    <property type="match status" value="1"/>
</dbReference>
<dbReference type="InterPro" id="IPR015424">
    <property type="entry name" value="PyrdxlP-dep_Trfase"/>
</dbReference>
<dbReference type="InterPro" id="IPR015421">
    <property type="entry name" value="PyrdxlP-dep_Trfase_major"/>
</dbReference>
<dbReference type="InterPro" id="IPR015422">
    <property type="entry name" value="PyrdxlP-dep_Trfase_small"/>
</dbReference>
<dbReference type="InterPro" id="IPR001085">
    <property type="entry name" value="Ser_HO-MeTrfase"/>
</dbReference>
<dbReference type="InterPro" id="IPR049943">
    <property type="entry name" value="Ser_HO-MeTrfase-like"/>
</dbReference>
<dbReference type="InterPro" id="IPR019798">
    <property type="entry name" value="Ser_HO-MeTrfase_PLP_BS"/>
</dbReference>
<dbReference type="InterPro" id="IPR039429">
    <property type="entry name" value="SHMT-like_dom"/>
</dbReference>
<dbReference type="NCBIfam" id="NF000586">
    <property type="entry name" value="PRK00011.1"/>
    <property type="match status" value="1"/>
</dbReference>
<dbReference type="PANTHER" id="PTHR11680">
    <property type="entry name" value="SERINE HYDROXYMETHYLTRANSFERASE"/>
    <property type="match status" value="1"/>
</dbReference>
<dbReference type="PANTHER" id="PTHR11680:SF35">
    <property type="entry name" value="SERINE HYDROXYMETHYLTRANSFERASE 1"/>
    <property type="match status" value="1"/>
</dbReference>
<dbReference type="Pfam" id="PF00464">
    <property type="entry name" value="SHMT"/>
    <property type="match status" value="1"/>
</dbReference>
<dbReference type="PIRSF" id="PIRSF000412">
    <property type="entry name" value="SHMT"/>
    <property type="match status" value="1"/>
</dbReference>
<dbReference type="SUPFAM" id="SSF53383">
    <property type="entry name" value="PLP-dependent transferases"/>
    <property type="match status" value="1"/>
</dbReference>
<dbReference type="PROSITE" id="PS00096">
    <property type="entry name" value="SHMT"/>
    <property type="match status" value="1"/>
</dbReference>
<name>GLYA_STRZP</name>
<organism>
    <name type="scientific">Streptococcus pneumoniae (strain P1031)</name>
    <dbReference type="NCBI Taxonomy" id="488223"/>
    <lineage>
        <taxon>Bacteria</taxon>
        <taxon>Bacillati</taxon>
        <taxon>Bacillota</taxon>
        <taxon>Bacilli</taxon>
        <taxon>Lactobacillales</taxon>
        <taxon>Streptococcaceae</taxon>
        <taxon>Streptococcus</taxon>
    </lineage>
</organism>
<protein>
    <recommendedName>
        <fullName evidence="1">Serine hydroxymethyltransferase</fullName>
        <shortName evidence="1">SHMT</shortName>
        <shortName evidence="1">Serine methylase</shortName>
        <ecNumber evidence="1">2.1.2.1</ecNumber>
    </recommendedName>
</protein>
<proteinExistence type="inferred from homology"/>
<accession>C1CKA2</accession>
<sequence>MIFDKDDFKAYDADLWNAIAKEEERQQNNIELIASENVVSKAVMAAQGSILTNKYAEGYPGRRYYGGTDVVDVVETLAIERAKEIFGAKFANVQPHSGSQANCAAYMSLIEPGDTVMGMDLAAGGHLTHGAPVSFSGQTYNFLSYSVDPETELLDFDAILKQAQEVKPKLIVAGASAYSQIIDFSKFREIADAVGAKLMVDMAHIAGLVAAGLHPSPVPYAHITTTTTHKTLRGPRGGLILTNDEDLAKKINSAIFPGIQGGPLEHVVAAKAVSFKEVLDPAFKEYAANVIKNSKAMADVFLQDPDFRIISGGTENHLFLVDVTKVVENGKVAQNLLDEVNITLNKNSIPYETLSPFKTSGIRIGAAAITARGFGEEESRKVAELIIKTLKNSENEAVLEEVRSAVKELTDAFPLYEE</sequence>
<reference key="1">
    <citation type="journal article" date="2010" name="Genome Biol.">
        <title>Structure and dynamics of the pan-genome of Streptococcus pneumoniae and closely related species.</title>
        <authorList>
            <person name="Donati C."/>
            <person name="Hiller N.L."/>
            <person name="Tettelin H."/>
            <person name="Muzzi A."/>
            <person name="Croucher N.J."/>
            <person name="Angiuoli S.V."/>
            <person name="Oggioni M."/>
            <person name="Dunning Hotopp J.C."/>
            <person name="Hu F.Z."/>
            <person name="Riley D.R."/>
            <person name="Covacci A."/>
            <person name="Mitchell T.J."/>
            <person name="Bentley S.D."/>
            <person name="Kilian M."/>
            <person name="Ehrlich G.D."/>
            <person name="Rappuoli R."/>
            <person name="Moxon E.R."/>
            <person name="Masignani V."/>
        </authorList>
    </citation>
    <scope>NUCLEOTIDE SEQUENCE [LARGE SCALE GENOMIC DNA]</scope>
    <source>
        <strain>P1031</strain>
    </source>
</reference>
<feature type="chain" id="PRO_1000117654" description="Serine hydroxymethyltransferase">
    <location>
        <begin position="1"/>
        <end position="418"/>
    </location>
</feature>
<feature type="binding site" evidence="1">
    <location>
        <position position="121"/>
    </location>
    <ligand>
        <name>(6S)-5,6,7,8-tetrahydrofolate</name>
        <dbReference type="ChEBI" id="CHEBI:57453"/>
    </ligand>
</feature>
<feature type="binding site" evidence="1">
    <location>
        <begin position="125"/>
        <end position="127"/>
    </location>
    <ligand>
        <name>(6S)-5,6,7,8-tetrahydrofolate</name>
        <dbReference type="ChEBI" id="CHEBI:57453"/>
    </ligand>
</feature>
<feature type="binding site" evidence="1">
    <location>
        <begin position="355"/>
        <end position="357"/>
    </location>
    <ligand>
        <name>(6S)-5,6,7,8-tetrahydrofolate</name>
        <dbReference type="ChEBI" id="CHEBI:57453"/>
    </ligand>
</feature>
<feature type="site" description="Plays an important role in substrate specificity" evidence="1">
    <location>
        <position position="229"/>
    </location>
</feature>
<feature type="modified residue" description="N6-(pyridoxal phosphate)lysine" evidence="1">
    <location>
        <position position="230"/>
    </location>
</feature>